<sequence>MSVSLVSRNVARKLLLVQLLVVIASGLLFSLKDPFWGVSAISGGLAVFLPNVLFMIFAWRHQAHTPAKGRVAWTFAFGEAFKVLAMLVLLVVALAVLKAVFLPLIVTWVLVLVVQILAPAVINNKG</sequence>
<keyword id="KW-0997">Cell inner membrane</keyword>
<keyword id="KW-1003">Cell membrane</keyword>
<keyword id="KW-0138">CF(0)</keyword>
<keyword id="KW-0375">Hydrogen ion transport</keyword>
<keyword id="KW-0406">Ion transport</keyword>
<keyword id="KW-0472">Membrane</keyword>
<keyword id="KW-1185">Reference proteome</keyword>
<keyword id="KW-0812">Transmembrane</keyword>
<keyword id="KW-1133">Transmembrane helix</keyword>
<keyword id="KW-0813">Transport</keyword>
<dbReference type="EMBL" id="AE014075">
    <property type="protein sequence ID" value="AAN83099.1"/>
    <property type="status" value="ALT_INIT"/>
    <property type="molecule type" value="Genomic_DNA"/>
</dbReference>
<dbReference type="RefSeq" id="WP_000116695.1">
    <property type="nucleotide sequence ID" value="NZ_CP051263.1"/>
</dbReference>
<dbReference type="SMR" id="P0ABC1"/>
<dbReference type="STRING" id="199310.c4667"/>
<dbReference type="GeneID" id="75205457"/>
<dbReference type="KEGG" id="ecc:c4667"/>
<dbReference type="eggNOG" id="COG3312">
    <property type="taxonomic scope" value="Bacteria"/>
</dbReference>
<dbReference type="HOGENOM" id="CLU_121415_2_0_6"/>
<dbReference type="Proteomes" id="UP000001410">
    <property type="component" value="Chromosome"/>
</dbReference>
<dbReference type="GO" id="GO:0005886">
    <property type="term" value="C:plasma membrane"/>
    <property type="evidence" value="ECO:0007669"/>
    <property type="project" value="UniProtKB-SubCell"/>
</dbReference>
<dbReference type="GO" id="GO:0045259">
    <property type="term" value="C:proton-transporting ATP synthase complex"/>
    <property type="evidence" value="ECO:0007669"/>
    <property type="project" value="UniProtKB-KW"/>
</dbReference>
<dbReference type="GO" id="GO:1902600">
    <property type="term" value="P:proton transmembrane transport"/>
    <property type="evidence" value="ECO:0007669"/>
    <property type="project" value="UniProtKB-KW"/>
</dbReference>
<dbReference type="InterPro" id="IPR005598">
    <property type="entry name" value="ATP_synth_I"/>
</dbReference>
<dbReference type="NCBIfam" id="NF005962">
    <property type="entry name" value="PRK08049.1"/>
    <property type="match status" value="1"/>
</dbReference>
<dbReference type="Pfam" id="PF03899">
    <property type="entry name" value="ATP-synt_I"/>
    <property type="match status" value="1"/>
</dbReference>
<feature type="initiator methionine" description="Removed" evidence="1">
    <location>
        <position position="1"/>
    </location>
</feature>
<feature type="chain" id="PRO_0000071707" description="ATP synthase protein I">
    <location>
        <begin position="2"/>
        <end position="126"/>
    </location>
</feature>
<feature type="topological domain" description="Cytoplasmic" evidence="2">
    <location>
        <begin position="2"/>
        <end position="14"/>
    </location>
</feature>
<feature type="transmembrane region" description="Helical" evidence="2">
    <location>
        <begin position="15"/>
        <end position="35"/>
    </location>
</feature>
<feature type="topological domain" description="Periplasmic" evidence="2">
    <location>
        <begin position="36"/>
        <end position="37"/>
    </location>
</feature>
<feature type="transmembrane region" description="Helical" evidence="2">
    <location>
        <begin position="38"/>
        <end position="58"/>
    </location>
</feature>
<feature type="topological domain" description="Cytoplasmic" evidence="2">
    <location>
        <begin position="59"/>
        <end position="70"/>
    </location>
</feature>
<feature type="transmembrane region" description="Helical" evidence="2">
    <location>
        <begin position="71"/>
        <end position="94"/>
    </location>
</feature>
<feature type="topological domain" description="Periplasmic" evidence="2">
    <location>
        <begin position="95"/>
        <end position="100"/>
    </location>
</feature>
<feature type="transmembrane region" description="Helical" evidence="2">
    <location>
        <begin position="101"/>
        <end position="117"/>
    </location>
</feature>
<feature type="topological domain" description="Cytoplasmic" evidence="2">
    <location>
        <begin position="118"/>
        <end position="126"/>
    </location>
</feature>
<evidence type="ECO:0000250" key="1"/>
<evidence type="ECO:0000255" key="2"/>
<evidence type="ECO:0000305" key="3"/>
<organism>
    <name type="scientific">Escherichia coli O6:H1 (strain CFT073 / ATCC 700928 / UPEC)</name>
    <dbReference type="NCBI Taxonomy" id="199310"/>
    <lineage>
        <taxon>Bacteria</taxon>
        <taxon>Pseudomonadati</taxon>
        <taxon>Pseudomonadota</taxon>
        <taxon>Gammaproteobacteria</taxon>
        <taxon>Enterobacterales</taxon>
        <taxon>Enterobacteriaceae</taxon>
        <taxon>Escherichia</taxon>
    </lineage>
</organism>
<reference key="1">
    <citation type="journal article" date="2002" name="Proc. Natl. Acad. Sci. U.S.A.">
        <title>Extensive mosaic structure revealed by the complete genome sequence of uropathogenic Escherichia coli.</title>
        <authorList>
            <person name="Welch R.A."/>
            <person name="Burland V."/>
            <person name="Plunkett G. III"/>
            <person name="Redford P."/>
            <person name="Roesch P."/>
            <person name="Rasko D."/>
            <person name="Buckles E.L."/>
            <person name="Liou S.-R."/>
            <person name="Boutin A."/>
            <person name="Hackett J."/>
            <person name="Stroud D."/>
            <person name="Mayhew G.F."/>
            <person name="Rose D.J."/>
            <person name="Zhou S."/>
            <person name="Schwartz D.C."/>
            <person name="Perna N.T."/>
            <person name="Mobley H.L.T."/>
            <person name="Donnenberg M.S."/>
            <person name="Blattner F.R."/>
        </authorList>
    </citation>
    <scope>NUCLEOTIDE SEQUENCE [LARGE SCALE GENOMIC DNA]</scope>
    <source>
        <strain>CFT073 / ATCC 700928 / UPEC</strain>
    </source>
</reference>
<proteinExistence type="inferred from homology"/>
<protein>
    <recommendedName>
        <fullName>ATP synthase protein I</fullName>
    </recommendedName>
</protein>
<name>ATPZ_ECOL6</name>
<comment type="function">
    <text>A possible function for this protein is to guide the assembly of the membrane sector of the ATPase enzyme complex.</text>
</comment>
<comment type="subcellular location">
    <subcellularLocation>
        <location evidence="1">Cell inner membrane</location>
        <topology evidence="1">Multi-pass membrane protein</topology>
    </subcellularLocation>
</comment>
<comment type="similarity">
    <text evidence="3">Belongs to the bacterial AtpI family.</text>
</comment>
<comment type="sequence caution" evidence="3">
    <conflict type="erroneous initiation">
        <sequence resource="EMBL-CDS" id="AAN83099"/>
    </conflict>
</comment>
<gene>
    <name type="primary">atpI</name>
    <name type="ordered locus">c4667</name>
</gene>
<accession>P0ABC1</accession>
<accession>P03808</accession>
<accession>P76747</accession>
<accession>Q47248</accession>